<feature type="chain" id="PRO_0000162968" description="NADPH-dependent 7-cyano-7-deazaguanine reductase">
    <location>
        <begin position="1"/>
        <end position="127"/>
    </location>
</feature>
<feature type="active site" description="Thioimide intermediate" evidence="1">
    <location>
        <position position="40"/>
    </location>
</feature>
<feature type="active site" description="Proton donor" evidence="1">
    <location>
        <position position="47"/>
    </location>
</feature>
<feature type="binding site" evidence="1">
    <location>
        <begin position="62"/>
        <end position="64"/>
    </location>
    <ligand>
        <name>substrate</name>
    </ligand>
</feature>
<feature type="binding site" evidence="1">
    <location>
        <begin position="81"/>
        <end position="82"/>
    </location>
    <ligand>
        <name>substrate</name>
    </ligand>
</feature>
<reference key="1">
    <citation type="journal article" date="2005" name="PLoS Biol.">
        <title>Major structural differences and novel potential virulence mechanisms from the genomes of multiple Campylobacter species.</title>
        <authorList>
            <person name="Fouts D.E."/>
            <person name="Mongodin E.F."/>
            <person name="Mandrell R.E."/>
            <person name="Miller W.G."/>
            <person name="Rasko D.A."/>
            <person name="Ravel J."/>
            <person name="Brinkac L.M."/>
            <person name="DeBoy R.T."/>
            <person name="Parker C.T."/>
            <person name="Daugherty S.C."/>
            <person name="Dodson R.J."/>
            <person name="Durkin A.S."/>
            <person name="Madupu R."/>
            <person name="Sullivan S.A."/>
            <person name="Shetty J.U."/>
            <person name="Ayodeji M.A."/>
            <person name="Shvartsbeyn A."/>
            <person name="Schatz M.C."/>
            <person name="Badger J.H."/>
            <person name="Fraser C.M."/>
            <person name="Nelson K.E."/>
        </authorList>
    </citation>
    <scope>NUCLEOTIDE SEQUENCE [LARGE SCALE GENOMIC DNA]</scope>
    <source>
        <strain>RM1221</strain>
    </source>
</reference>
<keyword id="KW-0963">Cytoplasm</keyword>
<keyword id="KW-0521">NADP</keyword>
<keyword id="KW-0560">Oxidoreductase</keyword>
<keyword id="KW-0671">Queuosine biosynthesis</keyword>
<evidence type="ECO:0000255" key="1">
    <source>
        <dbReference type="HAMAP-Rule" id="MF_00818"/>
    </source>
</evidence>
<comment type="function">
    <text evidence="1">Catalyzes the NADPH-dependent reduction of 7-cyano-7-deazaguanine (preQ0) to 7-aminomethyl-7-deazaguanine (preQ1).</text>
</comment>
<comment type="catalytic activity">
    <reaction evidence="1">
        <text>7-aminomethyl-7-carbaguanine + 2 NADP(+) = 7-cyano-7-deazaguanine + 2 NADPH + 3 H(+)</text>
        <dbReference type="Rhea" id="RHEA:13409"/>
        <dbReference type="ChEBI" id="CHEBI:15378"/>
        <dbReference type="ChEBI" id="CHEBI:45075"/>
        <dbReference type="ChEBI" id="CHEBI:57783"/>
        <dbReference type="ChEBI" id="CHEBI:58349"/>
        <dbReference type="ChEBI" id="CHEBI:58703"/>
        <dbReference type="EC" id="1.7.1.13"/>
    </reaction>
</comment>
<comment type="pathway">
    <text evidence="1">tRNA modification; tRNA-queuosine biosynthesis.</text>
</comment>
<comment type="subcellular location">
    <subcellularLocation>
        <location evidence="1">Cytoplasm</location>
    </subcellularLocation>
</comment>
<comment type="similarity">
    <text evidence="1">Belongs to the GTP cyclohydrolase I family. QueF type 1 subfamily.</text>
</comment>
<protein>
    <recommendedName>
        <fullName evidence="1">NADPH-dependent 7-cyano-7-deazaguanine reductase</fullName>
        <ecNumber evidence="1">1.7.1.13</ecNumber>
    </recommendedName>
    <alternativeName>
        <fullName evidence="1">7-cyano-7-carbaguanine reductase</fullName>
    </alternativeName>
    <alternativeName>
        <fullName evidence="1">NADPH-dependent nitrile oxidoreductase</fullName>
    </alternativeName>
    <alternativeName>
        <fullName evidence="1">PreQ(0) reductase</fullName>
    </alternativeName>
</protein>
<name>QUEF_CAMJR</name>
<organism>
    <name type="scientific">Campylobacter jejuni (strain RM1221)</name>
    <dbReference type="NCBI Taxonomy" id="195099"/>
    <lineage>
        <taxon>Bacteria</taxon>
        <taxon>Pseudomonadati</taxon>
        <taxon>Campylobacterota</taxon>
        <taxon>Epsilonproteobacteria</taxon>
        <taxon>Campylobacterales</taxon>
        <taxon>Campylobacteraceae</taxon>
        <taxon>Campylobacter</taxon>
    </lineage>
</organism>
<sequence>MRYGEKEIKEFDVENMEIWPNDAKNDYIIKITLPEFMCCCPRSGYPDFATIYLEYMPNKFVVELKAIKLYINTFMYRNVSHEASINEIYNTLKDKLKPKWIKVVGDFNPRGNVHTVIECRSDMVVPK</sequence>
<proteinExistence type="inferred from homology"/>
<accession>Q5HS73</accession>
<gene>
    <name evidence="1" type="primary">queF</name>
    <name type="ordered locus">CJE1892</name>
</gene>
<dbReference type="EC" id="1.7.1.13" evidence="1"/>
<dbReference type="EMBL" id="CP000025">
    <property type="protein sequence ID" value="AAW34492.1"/>
    <property type="molecule type" value="Genomic_DNA"/>
</dbReference>
<dbReference type="RefSeq" id="WP_002783530.1">
    <property type="nucleotide sequence ID" value="NC_003912.7"/>
</dbReference>
<dbReference type="SMR" id="Q5HS73"/>
<dbReference type="KEGG" id="cjr:CJE1892"/>
<dbReference type="HOGENOM" id="CLU_102489_1_1_7"/>
<dbReference type="UniPathway" id="UPA00392"/>
<dbReference type="GO" id="GO:0005737">
    <property type="term" value="C:cytoplasm"/>
    <property type="evidence" value="ECO:0007669"/>
    <property type="project" value="UniProtKB-SubCell"/>
</dbReference>
<dbReference type="GO" id="GO:0033739">
    <property type="term" value="F:preQ1 synthase activity"/>
    <property type="evidence" value="ECO:0007669"/>
    <property type="project" value="UniProtKB-UniRule"/>
</dbReference>
<dbReference type="GO" id="GO:0008616">
    <property type="term" value="P:queuosine biosynthetic process"/>
    <property type="evidence" value="ECO:0007669"/>
    <property type="project" value="UniProtKB-UniRule"/>
</dbReference>
<dbReference type="GO" id="GO:0006400">
    <property type="term" value="P:tRNA modification"/>
    <property type="evidence" value="ECO:0007669"/>
    <property type="project" value="UniProtKB-UniRule"/>
</dbReference>
<dbReference type="Gene3D" id="3.30.1130.10">
    <property type="match status" value="1"/>
</dbReference>
<dbReference type="HAMAP" id="MF_00818">
    <property type="entry name" value="QueF_type1"/>
    <property type="match status" value="1"/>
</dbReference>
<dbReference type="InterPro" id="IPR043133">
    <property type="entry name" value="GTP-CH-I_C/QueF"/>
</dbReference>
<dbReference type="InterPro" id="IPR050084">
    <property type="entry name" value="NADPH_dep_7-cyano-7-deazaG_red"/>
</dbReference>
<dbReference type="InterPro" id="IPR029500">
    <property type="entry name" value="QueF"/>
</dbReference>
<dbReference type="InterPro" id="IPR016856">
    <property type="entry name" value="QueF_type1"/>
</dbReference>
<dbReference type="NCBIfam" id="TIGR03139">
    <property type="entry name" value="QueF-II"/>
    <property type="match status" value="1"/>
</dbReference>
<dbReference type="PANTHER" id="PTHR34354">
    <property type="entry name" value="NADPH-DEPENDENT 7-CYANO-7-DEAZAGUANINE REDUCTASE"/>
    <property type="match status" value="1"/>
</dbReference>
<dbReference type="PANTHER" id="PTHR34354:SF1">
    <property type="entry name" value="NADPH-DEPENDENT 7-CYANO-7-DEAZAGUANINE REDUCTASE"/>
    <property type="match status" value="1"/>
</dbReference>
<dbReference type="Pfam" id="PF14489">
    <property type="entry name" value="QueF"/>
    <property type="match status" value="1"/>
</dbReference>
<dbReference type="PIRSF" id="PIRSF027377">
    <property type="entry name" value="Nitrile_oxidored_QueF"/>
    <property type="match status" value="1"/>
</dbReference>
<dbReference type="SUPFAM" id="SSF55620">
    <property type="entry name" value="Tetrahydrobiopterin biosynthesis enzymes-like"/>
    <property type="match status" value="1"/>
</dbReference>